<reference key="1">
    <citation type="journal article" date="2000" name="Proc. Natl. Acad. Sci. U.S.A.">
        <title>Genome sequence of Halobacterium species NRC-1.</title>
        <authorList>
            <person name="Ng W.V."/>
            <person name="Kennedy S.P."/>
            <person name="Mahairas G.G."/>
            <person name="Berquist B."/>
            <person name="Pan M."/>
            <person name="Shukla H.D."/>
            <person name="Lasky S.R."/>
            <person name="Baliga N.S."/>
            <person name="Thorsson V."/>
            <person name="Sbrogna J."/>
            <person name="Swartzell S."/>
            <person name="Weir D."/>
            <person name="Hall J."/>
            <person name="Dahl T.A."/>
            <person name="Welti R."/>
            <person name="Goo Y.A."/>
            <person name="Leithauser B."/>
            <person name="Keller K."/>
            <person name="Cruz R."/>
            <person name="Danson M.J."/>
            <person name="Hough D.W."/>
            <person name="Maddocks D.G."/>
            <person name="Jablonski P.E."/>
            <person name="Krebs M.P."/>
            <person name="Angevine C.M."/>
            <person name="Dale H."/>
            <person name="Isenbarger T.A."/>
            <person name="Peck R.F."/>
            <person name="Pohlschroder M."/>
            <person name="Spudich J.L."/>
            <person name="Jung K.-H."/>
            <person name="Alam M."/>
            <person name="Freitas T."/>
            <person name="Hou S."/>
            <person name="Daniels C.J."/>
            <person name="Dennis P.P."/>
            <person name="Omer A.D."/>
            <person name="Ebhardt H."/>
            <person name="Lowe T.M."/>
            <person name="Liang P."/>
            <person name="Riley M."/>
            <person name="Hood L."/>
            <person name="DasSarma S."/>
        </authorList>
    </citation>
    <scope>NUCLEOTIDE SEQUENCE [LARGE SCALE GENOMIC DNA]</scope>
    <source>
        <strain>ATCC 700922 / JCM 11081 / NRC-1</strain>
    </source>
</reference>
<gene>
    <name evidence="1" type="primary">pstB1</name>
    <name type="ordered locus">VNG_0452G</name>
</gene>
<name>PSTB1_HALSA</name>
<comment type="function">
    <text evidence="1">Part of the ABC transporter complex PstSACB involved in phosphate import. Responsible for energy coupling to the transport system.</text>
</comment>
<comment type="catalytic activity">
    <reaction evidence="1">
        <text>phosphate(out) + ATP + H2O = ADP + 2 phosphate(in) + H(+)</text>
        <dbReference type="Rhea" id="RHEA:24440"/>
        <dbReference type="ChEBI" id="CHEBI:15377"/>
        <dbReference type="ChEBI" id="CHEBI:15378"/>
        <dbReference type="ChEBI" id="CHEBI:30616"/>
        <dbReference type="ChEBI" id="CHEBI:43474"/>
        <dbReference type="ChEBI" id="CHEBI:456216"/>
        <dbReference type="EC" id="7.3.2.1"/>
    </reaction>
</comment>
<comment type="subunit">
    <text evidence="1">The complex is composed of two ATP-binding proteins (PstB), two transmembrane proteins (PstC and PstA) and a solute-binding protein (PstS).</text>
</comment>
<comment type="subcellular location">
    <subcellularLocation>
        <location evidence="1">Cell membrane</location>
        <topology evidence="1">Peripheral membrane protein</topology>
    </subcellularLocation>
</comment>
<comment type="similarity">
    <text evidence="1">Belongs to the ABC transporter superfamily. Phosphate importer (TC 3.A.1.7) family.</text>
</comment>
<organism>
    <name type="scientific">Halobacterium salinarum (strain ATCC 700922 / JCM 11081 / NRC-1)</name>
    <name type="common">Halobacterium halobium</name>
    <dbReference type="NCBI Taxonomy" id="64091"/>
    <lineage>
        <taxon>Archaea</taxon>
        <taxon>Methanobacteriati</taxon>
        <taxon>Methanobacteriota</taxon>
        <taxon>Stenosarchaea group</taxon>
        <taxon>Halobacteria</taxon>
        <taxon>Halobacteriales</taxon>
        <taxon>Halobacteriaceae</taxon>
        <taxon>Halobacterium</taxon>
        <taxon>Halobacterium salinarum NRC-34001</taxon>
    </lineage>
</organism>
<accession>Q9HS13</accession>
<proteinExistence type="inferred from homology"/>
<dbReference type="EC" id="7.3.2.1" evidence="1"/>
<dbReference type="EMBL" id="AE004437">
    <property type="protein sequence ID" value="AAG18995.1"/>
    <property type="molecule type" value="Genomic_DNA"/>
</dbReference>
<dbReference type="PIR" id="G84203">
    <property type="entry name" value="G84203"/>
</dbReference>
<dbReference type="SMR" id="Q9HS13"/>
<dbReference type="FunCoup" id="Q9HS13">
    <property type="interactions" value="42"/>
</dbReference>
<dbReference type="STRING" id="64091.VNG_0452G"/>
<dbReference type="PaxDb" id="64091-VNG_0452G"/>
<dbReference type="KEGG" id="hal:VNG_0452G"/>
<dbReference type="PATRIC" id="fig|64091.14.peg.339"/>
<dbReference type="HOGENOM" id="CLU_000604_1_22_2"/>
<dbReference type="InParanoid" id="Q9HS13"/>
<dbReference type="OrthoDB" id="31298at2157"/>
<dbReference type="PhylomeDB" id="Q9HS13"/>
<dbReference type="Proteomes" id="UP000000554">
    <property type="component" value="Chromosome"/>
</dbReference>
<dbReference type="GO" id="GO:0005886">
    <property type="term" value="C:plasma membrane"/>
    <property type="evidence" value="ECO:0007669"/>
    <property type="project" value="UniProtKB-SubCell"/>
</dbReference>
<dbReference type="GO" id="GO:0005524">
    <property type="term" value="F:ATP binding"/>
    <property type="evidence" value="ECO:0007669"/>
    <property type="project" value="UniProtKB-KW"/>
</dbReference>
<dbReference type="GO" id="GO:0016887">
    <property type="term" value="F:ATP hydrolysis activity"/>
    <property type="evidence" value="ECO:0007669"/>
    <property type="project" value="InterPro"/>
</dbReference>
<dbReference type="GO" id="GO:0015415">
    <property type="term" value="F:ATPase-coupled phosphate ion transmembrane transporter activity"/>
    <property type="evidence" value="ECO:0007669"/>
    <property type="project" value="UniProtKB-EC"/>
</dbReference>
<dbReference type="GO" id="GO:0035435">
    <property type="term" value="P:phosphate ion transmembrane transport"/>
    <property type="evidence" value="ECO:0007669"/>
    <property type="project" value="InterPro"/>
</dbReference>
<dbReference type="CDD" id="cd03260">
    <property type="entry name" value="ABC_PstB_phosphate_transporter"/>
    <property type="match status" value="1"/>
</dbReference>
<dbReference type="Gene3D" id="3.40.50.300">
    <property type="entry name" value="P-loop containing nucleotide triphosphate hydrolases"/>
    <property type="match status" value="1"/>
</dbReference>
<dbReference type="InterPro" id="IPR003593">
    <property type="entry name" value="AAA+_ATPase"/>
</dbReference>
<dbReference type="InterPro" id="IPR003439">
    <property type="entry name" value="ABC_transporter-like_ATP-bd"/>
</dbReference>
<dbReference type="InterPro" id="IPR017871">
    <property type="entry name" value="ABC_transporter-like_CS"/>
</dbReference>
<dbReference type="InterPro" id="IPR027417">
    <property type="entry name" value="P-loop_NTPase"/>
</dbReference>
<dbReference type="InterPro" id="IPR005670">
    <property type="entry name" value="PstB-like"/>
</dbReference>
<dbReference type="NCBIfam" id="TIGR00972">
    <property type="entry name" value="3a0107s01c2"/>
    <property type="match status" value="1"/>
</dbReference>
<dbReference type="PANTHER" id="PTHR43423">
    <property type="entry name" value="ABC TRANSPORTER I FAMILY MEMBER 17"/>
    <property type="match status" value="1"/>
</dbReference>
<dbReference type="PANTHER" id="PTHR43423:SF1">
    <property type="entry name" value="ABC TRANSPORTER I FAMILY MEMBER 17"/>
    <property type="match status" value="1"/>
</dbReference>
<dbReference type="Pfam" id="PF00005">
    <property type="entry name" value="ABC_tran"/>
    <property type="match status" value="1"/>
</dbReference>
<dbReference type="SMART" id="SM00382">
    <property type="entry name" value="AAA"/>
    <property type="match status" value="1"/>
</dbReference>
<dbReference type="SUPFAM" id="SSF52540">
    <property type="entry name" value="P-loop containing nucleoside triphosphate hydrolases"/>
    <property type="match status" value="1"/>
</dbReference>
<dbReference type="PROSITE" id="PS00211">
    <property type="entry name" value="ABC_TRANSPORTER_1"/>
    <property type="match status" value="1"/>
</dbReference>
<dbReference type="PROSITE" id="PS50893">
    <property type="entry name" value="ABC_TRANSPORTER_2"/>
    <property type="match status" value="1"/>
</dbReference>
<dbReference type="PROSITE" id="PS51238">
    <property type="entry name" value="PSTB"/>
    <property type="match status" value="1"/>
</dbReference>
<keyword id="KW-0067">ATP-binding</keyword>
<keyword id="KW-1003">Cell membrane</keyword>
<keyword id="KW-0472">Membrane</keyword>
<keyword id="KW-0547">Nucleotide-binding</keyword>
<keyword id="KW-0592">Phosphate transport</keyword>
<keyword id="KW-1185">Reference proteome</keyword>
<keyword id="KW-1278">Translocase</keyword>
<keyword id="KW-0813">Transport</keyword>
<feature type="chain" id="PRO_0000092943" description="Phosphate import ATP-binding protein PstB 1">
    <location>
        <begin position="1"/>
        <end position="281"/>
    </location>
</feature>
<feature type="domain" description="ABC transporter" evidence="1">
    <location>
        <begin position="36"/>
        <end position="276"/>
    </location>
</feature>
<feature type="region of interest" description="Disordered" evidence="2">
    <location>
        <begin position="1"/>
        <end position="34"/>
    </location>
</feature>
<feature type="compositionally biased region" description="Low complexity" evidence="2">
    <location>
        <begin position="15"/>
        <end position="28"/>
    </location>
</feature>
<feature type="binding site" evidence="1">
    <location>
        <begin position="68"/>
        <end position="75"/>
    </location>
    <ligand>
        <name>ATP</name>
        <dbReference type="ChEBI" id="CHEBI:30616"/>
    </ligand>
</feature>
<sequence length="281" mass="30596">MTENTAETADESSDGGVTATTGAATTTPTTPPEPVIRARDLDVFYGSERALESVDIDIPEQQVTAIIGPSGCGKSTFLRCINRMNDRIDAARIDGDLTLRGTNVYDAAVDPVALRRRVGMVFQEPNPFPKSIYDNVAYGLEIQDVEGDHDEIVEQSLRRAALWDEVSHQLDSSGVALSGGQQQRLCIARAIAPDPEVLLMDEPASALDPVATSQVEDLIEELAEEYTVVIVTHNMQQAARISDKTAVFLTGGKLVEFGDTDQIFENPEHQRVEEYITGKFG</sequence>
<evidence type="ECO:0000255" key="1">
    <source>
        <dbReference type="HAMAP-Rule" id="MF_01702"/>
    </source>
</evidence>
<evidence type="ECO:0000256" key="2">
    <source>
        <dbReference type="SAM" id="MobiDB-lite"/>
    </source>
</evidence>
<protein>
    <recommendedName>
        <fullName evidence="1">Phosphate import ATP-binding protein PstB 1</fullName>
        <ecNumber evidence="1">7.3.2.1</ecNumber>
    </recommendedName>
    <alternativeName>
        <fullName evidence="1">ABC phosphate transporter 1</fullName>
    </alternativeName>
    <alternativeName>
        <fullName evidence="1">Phosphate-transporting ATPase 1</fullName>
    </alternativeName>
</protein>